<organism>
    <name type="scientific">Prochlorococcus marinus (strain MIT 9312)</name>
    <dbReference type="NCBI Taxonomy" id="74546"/>
    <lineage>
        <taxon>Bacteria</taxon>
        <taxon>Bacillati</taxon>
        <taxon>Cyanobacteriota</taxon>
        <taxon>Cyanophyceae</taxon>
        <taxon>Synechococcales</taxon>
        <taxon>Prochlorococcaceae</taxon>
        <taxon>Prochlorococcus</taxon>
    </lineage>
</organism>
<sequence>MVKPNKLANNNYLSSFDMTTDEFINILDLAKNFKNKKINIDPNNKVLGLIFDKSSTRTRVSFQVAMSRLGGTTIDLNPITSQIGRGEPIKDTARVLSRYCDVIAIRTFNHSDLEEYAKWSTIPVINALTDLEHPCQALADFLTIQEEFIDFRNVVLTFIGDGNNVANSLILCGALLGVEVRIACPRGYEPNVSVINKALEIYKNKNLLKIIHDPYDAVLGANVLYTDVWSSMGEENQKEDKDKDFKGFTINSSLVRKANKDAIILHCLPAYRGKEISAEVFESKISRIFKQAENRLHVQQALLAGLLS</sequence>
<feature type="chain" id="PRO_1000065110" description="Ornithine carbamoyltransferase">
    <location>
        <begin position="1"/>
        <end position="308"/>
    </location>
</feature>
<feature type="binding site" evidence="2">
    <location>
        <begin position="55"/>
        <end position="58"/>
    </location>
    <ligand>
        <name>carbamoyl phosphate</name>
        <dbReference type="ChEBI" id="CHEBI:58228"/>
    </ligand>
</feature>
<feature type="binding site" evidence="2">
    <location>
        <position position="82"/>
    </location>
    <ligand>
        <name>carbamoyl phosphate</name>
        <dbReference type="ChEBI" id="CHEBI:58228"/>
    </ligand>
</feature>
<feature type="binding site" evidence="2">
    <location>
        <position position="106"/>
    </location>
    <ligand>
        <name>carbamoyl phosphate</name>
        <dbReference type="ChEBI" id="CHEBI:58228"/>
    </ligand>
</feature>
<feature type="binding site" evidence="2">
    <location>
        <begin position="133"/>
        <end position="136"/>
    </location>
    <ligand>
        <name>carbamoyl phosphate</name>
        <dbReference type="ChEBI" id="CHEBI:58228"/>
    </ligand>
</feature>
<feature type="binding site" evidence="2">
    <location>
        <position position="164"/>
    </location>
    <ligand>
        <name>L-ornithine</name>
        <dbReference type="ChEBI" id="CHEBI:46911"/>
    </ligand>
</feature>
<feature type="binding site" evidence="2">
    <location>
        <position position="227"/>
    </location>
    <ligand>
        <name>L-ornithine</name>
        <dbReference type="ChEBI" id="CHEBI:46911"/>
    </ligand>
</feature>
<feature type="binding site" evidence="2">
    <location>
        <begin position="231"/>
        <end position="232"/>
    </location>
    <ligand>
        <name>L-ornithine</name>
        <dbReference type="ChEBI" id="CHEBI:46911"/>
    </ligand>
</feature>
<feature type="binding site" evidence="2">
    <location>
        <begin position="267"/>
        <end position="268"/>
    </location>
    <ligand>
        <name>carbamoyl phosphate</name>
        <dbReference type="ChEBI" id="CHEBI:58228"/>
    </ligand>
</feature>
<feature type="binding site" evidence="2">
    <location>
        <position position="295"/>
    </location>
    <ligand>
        <name>carbamoyl phosphate</name>
        <dbReference type="ChEBI" id="CHEBI:58228"/>
    </ligand>
</feature>
<reference key="1">
    <citation type="journal article" date="2006" name="Science">
        <title>Genomic islands and the ecology and evolution of Prochlorococcus.</title>
        <authorList>
            <person name="Coleman M.L."/>
            <person name="Sullivan M.B."/>
            <person name="Martiny A.C."/>
            <person name="Steglich C."/>
            <person name="Barry K."/>
            <person name="Delong E.F."/>
            <person name="Chisholm S.W."/>
        </authorList>
    </citation>
    <scope>NUCLEOTIDE SEQUENCE [LARGE SCALE GENOMIC DNA]</scope>
    <source>
        <strain>MIT 9312</strain>
    </source>
</reference>
<gene>
    <name evidence="2" type="primary">argF</name>
    <name type="ordered locus">PMT9312_1357</name>
</gene>
<keyword id="KW-0028">Amino-acid biosynthesis</keyword>
<keyword id="KW-0055">Arginine biosynthesis</keyword>
<keyword id="KW-0963">Cytoplasm</keyword>
<keyword id="KW-0808">Transferase</keyword>
<proteinExistence type="inferred from homology"/>
<dbReference type="EC" id="2.1.3.3" evidence="2"/>
<dbReference type="EMBL" id="CP000111">
    <property type="protein sequence ID" value="ABB50417.1"/>
    <property type="molecule type" value="Genomic_DNA"/>
</dbReference>
<dbReference type="RefSeq" id="WP_011376903.1">
    <property type="nucleotide sequence ID" value="NC_007577.1"/>
</dbReference>
<dbReference type="SMR" id="Q319M8"/>
<dbReference type="STRING" id="74546.PMT9312_1357"/>
<dbReference type="KEGG" id="pmi:PMT9312_1357"/>
<dbReference type="eggNOG" id="COG0078">
    <property type="taxonomic scope" value="Bacteria"/>
</dbReference>
<dbReference type="HOGENOM" id="CLU_043846_3_2_3"/>
<dbReference type="OrthoDB" id="9802587at2"/>
<dbReference type="UniPathway" id="UPA00068">
    <property type="reaction ID" value="UER00112"/>
</dbReference>
<dbReference type="Proteomes" id="UP000002715">
    <property type="component" value="Chromosome"/>
</dbReference>
<dbReference type="GO" id="GO:0005737">
    <property type="term" value="C:cytoplasm"/>
    <property type="evidence" value="ECO:0007669"/>
    <property type="project" value="UniProtKB-SubCell"/>
</dbReference>
<dbReference type="GO" id="GO:0016597">
    <property type="term" value="F:amino acid binding"/>
    <property type="evidence" value="ECO:0007669"/>
    <property type="project" value="InterPro"/>
</dbReference>
<dbReference type="GO" id="GO:0004585">
    <property type="term" value="F:ornithine carbamoyltransferase activity"/>
    <property type="evidence" value="ECO:0007669"/>
    <property type="project" value="UniProtKB-UniRule"/>
</dbReference>
<dbReference type="GO" id="GO:0042450">
    <property type="term" value="P:arginine biosynthetic process via ornithine"/>
    <property type="evidence" value="ECO:0007669"/>
    <property type="project" value="TreeGrafter"/>
</dbReference>
<dbReference type="GO" id="GO:0019240">
    <property type="term" value="P:citrulline biosynthetic process"/>
    <property type="evidence" value="ECO:0007669"/>
    <property type="project" value="TreeGrafter"/>
</dbReference>
<dbReference type="GO" id="GO:0006526">
    <property type="term" value="P:L-arginine biosynthetic process"/>
    <property type="evidence" value="ECO:0007669"/>
    <property type="project" value="UniProtKB-UniRule"/>
</dbReference>
<dbReference type="FunFam" id="3.40.50.1370:FF:000008">
    <property type="entry name" value="Ornithine carbamoyltransferase"/>
    <property type="match status" value="1"/>
</dbReference>
<dbReference type="Gene3D" id="3.40.50.1370">
    <property type="entry name" value="Aspartate/ornithine carbamoyltransferase"/>
    <property type="match status" value="2"/>
</dbReference>
<dbReference type="HAMAP" id="MF_01109">
    <property type="entry name" value="OTCase"/>
    <property type="match status" value="1"/>
</dbReference>
<dbReference type="InterPro" id="IPR006132">
    <property type="entry name" value="Asp/Orn_carbamoyltranf_P-bd"/>
</dbReference>
<dbReference type="InterPro" id="IPR006130">
    <property type="entry name" value="Asp/Orn_carbamoylTrfase"/>
</dbReference>
<dbReference type="InterPro" id="IPR036901">
    <property type="entry name" value="Asp/Orn_carbamoylTrfase_sf"/>
</dbReference>
<dbReference type="InterPro" id="IPR006131">
    <property type="entry name" value="Asp_carbamoyltransf_Asp/Orn-bd"/>
</dbReference>
<dbReference type="InterPro" id="IPR002292">
    <property type="entry name" value="Orn/put_carbamltrans"/>
</dbReference>
<dbReference type="InterPro" id="IPR024904">
    <property type="entry name" value="OTCase_ArgI"/>
</dbReference>
<dbReference type="NCBIfam" id="TIGR00658">
    <property type="entry name" value="orni_carb_tr"/>
    <property type="match status" value="1"/>
</dbReference>
<dbReference type="NCBIfam" id="NF001986">
    <property type="entry name" value="PRK00779.1"/>
    <property type="match status" value="1"/>
</dbReference>
<dbReference type="PANTHER" id="PTHR45753">
    <property type="entry name" value="ORNITHINE CARBAMOYLTRANSFERASE, MITOCHONDRIAL"/>
    <property type="match status" value="1"/>
</dbReference>
<dbReference type="PANTHER" id="PTHR45753:SF3">
    <property type="entry name" value="ORNITHINE TRANSCARBAMYLASE, MITOCHONDRIAL"/>
    <property type="match status" value="1"/>
</dbReference>
<dbReference type="Pfam" id="PF00185">
    <property type="entry name" value="OTCace"/>
    <property type="match status" value="1"/>
</dbReference>
<dbReference type="Pfam" id="PF02729">
    <property type="entry name" value="OTCace_N"/>
    <property type="match status" value="1"/>
</dbReference>
<dbReference type="PRINTS" id="PR00100">
    <property type="entry name" value="AOTCASE"/>
</dbReference>
<dbReference type="PRINTS" id="PR00102">
    <property type="entry name" value="OTCASE"/>
</dbReference>
<dbReference type="SUPFAM" id="SSF53671">
    <property type="entry name" value="Aspartate/ornithine carbamoyltransferase"/>
    <property type="match status" value="1"/>
</dbReference>
<dbReference type="PROSITE" id="PS00097">
    <property type="entry name" value="CARBAMOYLTRANSFERASE"/>
    <property type="match status" value="1"/>
</dbReference>
<comment type="function">
    <text evidence="1">Reversibly catalyzes the transfer of the carbamoyl group from carbamoyl phosphate (CP) to the N(epsilon) atom of ornithine (ORN) to produce L-citrulline.</text>
</comment>
<comment type="catalytic activity">
    <reaction evidence="2">
        <text>carbamoyl phosphate + L-ornithine = L-citrulline + phosphate + H(+)</text>
        <dbReference type="Rhea" id="RHEA:19513"/>
        <dbReference type="ChEBI" id="CHEBI:15378"/>
        <dbReference type="ChEBI" id="CHEBI:43474"/>
        <dbReference type="ChEBI" id="CHEBI:46911"/>
        <dbReference type="ChEBI" id="CHEBI:57743"/>
        <dbReference type="ChEBI" id="CHEBI:58228"/>
        <dbReference type="EC" id="2.1.3.3"/>
    </reaction>
</comment>
<comment type="pathway">
    <text evidence="2">Amino-acid biosynthesis; L-arginine biosynthesis; L-arginine from L-ornithine and carbamoyl phosphate: step 1/3.</text>
</comment>
<comment type="subcellular location">
    <subcellularLocation>
        <location evidence="2">Cytoplasm</location>
    </subcellularLocation>
</comment>
<comment type="similarity">
    <text evidence="2">Belongs to the aspartate/ornithine carbamoyltransferase superfamily. OTCase family.</text>
</comment>
<protein>
    <recommendedName>
        <fullName evidence="2">Ornithine carbamoyltransferase</fullName>
        <shortName evidence="2">OTCase</shortName>
        <ecNumber evidence="2">2.1.3.3</ecNumber>
    </recommendedName>
</protein>
<accession>Q319M8</accession>
<evidence type="ECO:0000250" key="1"/>
<evidence type="ECO:0000255" key="2">
    <source>
        <dbReference type="HAMAP-Rule" id="MF_01109"/>
    </source>
</evidence>
<name>OTC_PROM9</name>